<dbReference type="EMBL" id="DQ673255">
    <property type="protein sequence ID" value="ABG74647.1"/>
    <property type="molecule type" value="Genomic_DNA"/>
</dbReference>
<dbReference type="RefSeq" id="YP_778509.1">
    <property type="nucleotide sequence ID" value="NC_008407.1"/>
</dbReference>
<dbReference type="SMR" id="Q06RB2"/>
<dbReference type="GeneID" id="4319728"/>
<dbReference type="GO" id="GO:0009535">
    <property type="term" value="C:chloroplast thylakoid membrane"/>
    <property type="evidence" value="ECO:0007669"/>
    <property type="project" value="UniProtKB-SubCell"/>
</dbReference>
<dbReference type="GO" id="GO:0009522">
    <property type="term" value="C:photosystem I"/>
    <property type="evidence" value="ECO:0007669"/>
    <property type="project" value="UniProtKB-KW"/>
</dbReference>
<dbReference type="GO" id="GO:0015979">
    <property type="term" value="P:photosynthesis"/>
    <property type="evidence" value="ECO:0007669"/>
    <property type="project" value="UniProtKB-UniRule"/>
</dbReference>
<dbReference type="Gene3D" id="1.20.5.510">
    <property type="entry name" value="Single helix bin"/>
    <property type="match status" value="1"/>
</dbReference>
<dbReference type="HAMAP" id="MF_00522">
    <property type="entry name" value="PSI_PsaJ"/>
    <property type="match status" value="1"/>
</dbReference>
<dbReference type="InterPro" id="IPR002615">
    <property type="entry name" value="PSI_PsaJ"/>
</dbReference>
<dbReference type="InterPro" id="IPR036062">
    <property type="entry name" value="PSI_PsaJ_sf"/>
</dbReference>
<dbReference type="PANTHER" id="PTHR36082">
    <property type="match status" value="1"/>
</dbReference>
<dbReference type="PANTHER" id="PTHR36082:SF2">
    <property type="entry name" value="PHOTOSYSTEM I REACTION CENTER SUBUNIT IX"/>
    <property type="match status" value="1"/>
</dbReference>
<dbReference type="Pfam" id="PF01701">
    <property type="entry name" value="PSI_PsaJ"/>
    <property type="match status" value="1"/>
</dbReference>
<dbReference type="SUPFAM" id="SSF81544">
    <property type="entry name" value="Subunit IX of photosystem I reaction centre, PsaJ"/>
    <property type="match status" value="1"/>
</dbReference>
<gene>
    <name evidence="1" type="primary">psaJ</name>
    <name type="ORF">JNC0730</name>
</gene>
<evidence type="ECO:0000255" key="1">
    <source>
        <dbReference type="HAMAP-Rule" id="MF_00522"/>
    </source>
</evidence>
<comment type="function">
    <text evidence="1">May help in the organization of the PsaE and PsaF subunits.</text>
</comment>
<comment type="subcellular location">
    <subcellularLocation>
        <location evidence="1">Plastid</location>
        <location evidence="1">Chloroplast thylakoid membrane</location>
        <topology evidence="1">Single-pass membrane protein</topology>
    </subcellularLocation>
</comment>
<comment type="similarity">
    <text evidence="1">Belongs to the PsaJ family.</text>
</comment>
<name>PSAJ_JASNU</name>
<organism>
    <name type="scientific">Jasminum nudiflorum</name>
    <name type="common">Winter jasmine</name>
    <dbReference type="NCBI Taxonomy" id="126431"/>
    <lineage>
        <taxon>Eukaryota</taxon>
        <taxon>Viridiplantae</taxon>
        <taxon>Streptophyta</taxon>
        <taxon>Embryophyta</taxon>
        <taxon>Tracheophyta</taxon>
        <taxon>Spermatophyta</taxon>
        <taxon>Magnoliopsida</taxon>
        <taxon>eudicotyledons</taxon>
        <taxon>Gunneridae</taxon>
        <taxon>Pentapetalae</taxon>
        <taxon>asterids</taxon>
        <taxon>lamiids</taxon>
        <taxon>Lamiales</taxon>
        <taxon>Oleaceae</taxon>
        <taxon>Jasmineae</taxon>
        <taxon>Jasminum</taxon>
    </lineage>
</organism>
<geneLocation type="chloroplast"/>
<proteinExistence type="inferred from homology"/>
<feature type="chain" id="PRO_0000276061" description="Photosystem I reaction center subunit IX">
    <location>
        <begin position="1"/>
        <end position="41"/>
    </location>
</feature>
<feature type="transmembrane region" description="Helical" evidence="1">
    <location>
        <begin position="7"/>
        <end position="27"/>
    </location>
</feature>
<sequence>MRDLKTYLSVAPVLSTLWFGALAGLLIEINRFFPDALTLSL</sequence>
<reference key="1">
    <citation type="journal article" date="2007" name="Mol. Biol. Evol.">
        <title>Gene relocations within chloroplast genomes of Jasminum and Menodora (Oleaceae) are due to multiple, overlapping inversions.</title>
        <authorList>
            <person name="Lee H.-L."/>
            <person name="Jansen R.K."/>
            <person name="Chumley T.W."/>
            <person name="Kim K.-J."/>
        </authorList>
    </citation>
    <scope>NUCLEOTIDE SEQUENCE [LARGE SCALE GENOMIC DNA]</scope>
</reference>
<keyword id="KW-0150">Chloroplast</keyword>
<keyword id="KW-0472">Membrane</keyword>
<keyword id="KW-0602">Photosynthesis</keyword>
<keyword id="KW-0603">Photosystem I</keyword>
<keyword id="KW-0934">Plastid</keyword>
<keyword id="KW-0793">Thylakoid</keyword>
<keyword id="KW-0812">Transmembrane</keyword>
<keyword id="KW-1133">Transmembrane helix</keyword>
<accession>Q06RB2</accession>
<protein>
    <recommendedName>
        <fullName evidence="1">Photosystem I reaction center subunit IX</fullName>
    </recommendedName>
    <alternativeName>
        <fullName evidence="1">PSI-J</fullName>
    </alternativeName>
</protein>